<comment type="function">
    <text evidence="1">This protein binds to the 23S rRNA, and is important in its secondary structure. It is located near the subunit interface in the base of the L7/L12 stalk, and near the tRNA binding site of the peptidyltransferase center.</text>
</comment>
<comment type="subunit">
    <text evidence="1">Part of the 50S ribosomal subunit.</text>
</comment>
<comment type="similarity">
    <text evidence="1">Belongs to the universal ribosomal protein uL6 family.</text>
</comment>
<feature type="chain" id="PRO_1000143979" description="Large ribosomal subunit protein uL6">
    <location>
        <begin position="1"/>
        <end position="180"/>
    </location>
</feature>
<evidence type="ECO:0000255" key="1">
    <source>
        <dbReference type="HAMAP-Rule" id="MF_01365"/>
    </source>
</evidence>
<evidence type="ECO:0000305" key="2"/>
<protein>
    <recommendedName>
        <fullName evidence="1">Large ribosomal subunit protein uL6</fullName>
    </recommendedName>
    <alternativeName>
        <fullName evidence="2">50S ribosomal protein L6</fullName>
    </alternativeName>
</protein>
<accession>B5YDV8</accession>
<gene>
    <name evidence="1" type="primary">rplF</name>
    <name type="ordered locus">DICTH_0852</name>
</gene>
<organism>
    <name type="scientific">Dictyoglomus thermophilum (strain ATCC 35947 / DSM 3960 / H-6-12)</name>
    <dbReference type="NCBI Taxonomy" id="309799"/>
    <lineage>
        <taxon>Bacteria</taxon>
        <taxon>Pseudomonadati</taxon>
        <taxon>Dictyoglomota</taxon>
        <taxon>Dictyoglomia</taxon>
        <taxon>Dictyoglomales</taxon>
        <taxon>Dictyoglomaceae</taxon>
        <taxon>Dictyoglomus</taxon>
    </lineage>
</organism>
<proteinExistence type="inferred from homology"/>
<name>RL6_DICT6</name>
<reference key="1">
    <citation type="journal article" date="2014" name="Genome Announc.">
        <title>Complete Genome Sequence of the Extreme Thermophile Dictyoglomus thermophilum H-6-12.</title>
        <authorList>
            <person name="Coil D.A."/>
            <person name="Badger J.H."/>
            <person name="Forberger H.C."/>
            <person name="Riggs F."/>
            <person name="Madupu R."/>
            <person name="Fedorova N."/>
            <person name="Ward N."/>
            <person name="Robb F.T."/>
            <person name="Eisen J.A."/>
        </authorList>
    </citation>
    <scope>NUCLEOTIDE SEQUENCE [LARGE SCALE GENOMIC DNA]</scope>
    <source>
        <strain>ATCC 35947 / DSM 3960 / H-6-12</strain>
    </source>
</reference>
<keyword id="KW-0687">Ribonucleoprotein</keyword>
<keyword id="KW-0689">Ribosomal protein</keyword>
<keyword id="KW-0694">RNA-binding</keyword>
<keyword id="KW-0699">rRNA-binding</keyword>
<sequence>MSRIGKKPVPIPQNVQVEIKDGNCVLVKGPLGQLEKTFSPLLTIKKVDNQIVVERPNDEKFVKALHGLTRALINNMVLGVTQGFEKRLELQGTGYRARVQGNKLILEVGFSHPVELEIPTGLTVTVQDNTKISVKGIDKELVGQFAAIVRSVRPAEPYKGKGIRYEGEKIRQKAGKAGKK</sequence>
<dbReference type="EMBL" id="CP001146">
    <property type="protein sequence ID" value="ACI19053.1"/>
    <property type="molecule type" value="Genomic_DNA"/>
</dbReference>
<dbReference type="RefSeq" id="WP_012547685.1">
    <property type="nucleotide sequence ID" value="NC_011297.1"/>
</dbReference>
<dbReference type="SMR" id="B5YDV8"/>
<dbReference type="STRING" id="309799.DICTH_0852"/>
<dbReference type="PaxDb" id="309799-DICTH_0852"/>
<dbReference type="KEGG" id="dth:DICTH_0852"/>
<dbReference type="eggNOG" id="COG0097">
    <property type="taxonomic scope" value="Bacteria"/>
</dbReference>
<dbReference type="HOGENOM" id="CLU_065464_1_2_0"/>
<dbReference type="OrthoDB" id="9805007at2"/>
<dbReference type="Proteomes" id="UP000001733">
    <property type="component" value="Chromosome"/>
</dbReference>
<dbReference type="GO" id="GO:0022625">
    <property type="term" value="C:cytosolic large ribosomal subunit"/>
    <property type="evidence" value="ECO:0007669"/>
    <property type="project" value="TreeGrafter"/>
</dbReference>
<dbReference type="GO" id="GO:0019843">
    <property type="term" value="F:rRNA binding"/>
    <property type="evidence" value="ECO:0007669"/>
    <property type="project" value="UniProtKB-UniRule"/>
</dbReference>
<dbReference type="GO" id="GO:0003735">
    <property type="term" value="F:structural constituent of ribosome"/>
    <property type="evidence" value="ECO:0007669"/>
    <property type="project" value="InterPro"/>
</dbReference>
<dbReference type="GO" id="GO:0002181">
    <property type="term" value="P:cytoplasmic translation"/>
    <property type="evidence" value="ECO:0007669"/>
    <property type="project" value="TreeGrafter"/>
</dbReference>
<dbReference type="FunFam" id="3.90.930.12:FF:000001">
    <property type="entry name" value="50S ribosomal protein L6"/>
    <property type="match status" value="1"/>
</dbReference>
<dbReference type="FunFam" id="3.90.930.12:FF:000002">
    <property type="entry name" value="50S ribosomal protein L6"/>
    <property type="match status" value="1"/>
</dbReference>
<dbReference type="Gene3D" id="3.90.930.12">
    <property type="entry name" value="Ribosomal protein L6, alpha-beta domain"/>
    <property type="match status" value="2"/>
</dbReference>
<dbReference type="HAMAP" id="MF_01365_B">
    <property type="entry name" value="Ribosomal_uL6_B"/>
    <property type="match status" value="1"/>
</dbReference>
<dbReference type="InterPro" id="IPR000702">
    <property type="entry name" value="Ribosomal_uL6-like"/>
</dbReference>
<dbReference type="InterPro" id="IPR036789">
    <property type="entry name" value="Ribosomal_uL6-like_a/b-dom_sf"/>
</dbReference>
<dbReference type="InterPro" id="IPR020040">
    <property type="entry name" value="Ribosomal_uL6_a/b-dom"/>
</dbReference>
<dbReference type="InterPro" id="IPR019906">
    <property type="entry name" value="Ribosomal_uL6_bac-type"/>
</dbReference>
<dbReference type="NCBIfam" id="TIGR03654">
    <property type="entry name" value="L6_bact"/>
    <property type="match status" value="1"/>
</dbReference>
<dbReference type="PANTHER" id="PTHR11655">
    <property type="entry name" value="60S/50S RIBOSOMAL PROTEIN L6/L9"/>
    <property type="match status" value="1"/>
</dbReference>
<dbReference type="PANTHER" id="PTHR11655:SF14">
    <property type="entry name" value="LARGE RIBOSOMAL SUBUNIT PROTEIN UL6M"/>
    <property type="match status" value="1"/>
</dbReference>
<dbReference type="Pfam" id="PF00347">
    <property type="entry name" value="Ribosomal_L6"/>
    <property type="match status" value="2"/>
</dbReference>
<dbReference type="PIRSF" id="PIRSF002162">
    <property type="entry name" value="Ribosomal_L6"/>
    <property type="match status" value="1"/>
</dbReference>
<dbReference type="PRINTS" id="PR00059">
    <property type="entry name" value="RIBOSOMALL6"/>
</dbReference>
<dbReference type="SUPFAM" id="SSF56053">
    <property type="entry name" value="Ribosomal protein L6"/>
    <property type="match status" value="2"/>
</dbReference>